<protein>
    <recommendedName>
        <fullName>Uncharacterized protein ycf68</fullName>
    </recommendedName>
    <alternativeName>
        <fullName>ORF113</fullName>
    </alternativeName>
</protein>
<evidence type="ECO:0000305" key="1"/>
<geneLocation type="chloroplast"/>
<keyword id="KW-0150">Chloroplast</keyword>
<keyword id="KW-0934">Plastid</keyword>
<dbReference type="EMBL" id="AY780259">
    <property type="protein sequence ID" value="AAX21074.1"/>
    <property type="molecule type" value="Genomic_DNA"/>
</dbReference>
<dbReference type="EMBL" id="AY780259">
    <property type="protein sequence ID" value="AAX21087.1"/>
    <property type="molecule type" value="Genomic_DNA"/>
</dbReference>
<dbReference type="GO" id="GO:0009507">
    <property type="term" value="C:chloroplast"/>
    <property type="evidence" value="ECO:0007669"/>
    <property type="project" value="UniProtKB-SubCell"/>
</dbReference>
<dbReference type="InterPro" id="IPR022546">
    <property type="entry name" value="Uncharacterised_Ycf68"/>
</dbReference>
<dbReference type="PANTHER" id="PTHR34890">
    <property type="entry name" value="ORF16-LACZ FUSION PROTEIN-RELATED"/>
    <property type="match status" value="1"/>
</dbReference>
<dbReference type="Pfam" id="PF10839">
    <property type="entry name" value="DUF2647"/>
    <property type="match status" value="1"/>
</dbReference>
<organism>
    <name type="scientific">Eucalyptus globulus subsp. globulus</name>
    <name type="common">Tasmanian blue gum</name>
    <dbReference type="NCBI Taxonomy" id="71271"/>
    <lineage>
        <taxon>Eukaryota</taxon>
        <taxon>Viridiplantae</taxon>
        <taxon>Streptophyta</taxon>
        <taxon>Embryophyta</taxon>
        <taxon>Tracheophyta</taxon>
        <taxon>Spermatophyta</taxon>
        <taxon>Magnoliopsida</taxon>
        <taxon>eudicotyledons</taxon>
        <taxon>Gunneridae</taxon>
        <taxon>Pentapetalae</taxon>
        <taxon>rosids</taxon>
        <taxon>malvids</taxon>
        <taxon>Myrtales</taxon>
        <taxon>Myrtaceae</taxon>
        <taxon>Myrtoideae</taxon>
        <taxon>Eucalypteae</taxon>
        <taxon>Eucalyptus</taxon>
    </lineage>
</organism>
<accession>Q49KT9</accession>
<gene>
    <name type="primary">ycf68-1</name>
</gene>
<gene>
    <name type="primary">ycf68-2</name>
</gene>
<sequence>MRRCAWAVRALSHMDSSMCSSAPDPEMWIIQGTLAWRTSPVRTGFETKPLLRRIDGAIQVRSNVDPTFYSLVGSGRSGGDPHGSSLLENPYIPYQCMDSYLSSTGLGSASMGK</sequence>
<proteinExistence type="inferred from homology"/>
<feature type="chain" id="PRO_0000361000" description="Uncharacterized protein ycf68">
    <location>
        <begin position="1"/>
        <end position="113"/>
    </location>
</feature>
<name>YCF68_EUCGG</name>
<comment type="subcellular location">
    <subcellularLocation>
        <location>Plastid</location>
        <location>Chloroplast</location>
    </subcellularLocation>
</comment>
<comment type="similarity">
    <text evidence="1">Belongs to the ycf68 family.</text>
</comment>
<reference key="1">
    <citation type="journal article" date="2005" name="DNA Res.">
        <title>Complete nucleotide sequence of the chloroplast genome from the Tasmanian blue gum, Eucalyptus globulus (Myrtaceae).</title>
        <authorList>
            <person name="Steane D.A."/>
        </authorList>
    </citation>
    <scope>NUCLEOTIDE SEQUENCE [LARGE SCALE GENOMIC DNA]</scope>
</reference>